<comment type="catalytic activity">
    <reaction evidence="1">
        <text>urea + 2 H2O + H(+) = hydrogencarbonate + 2 NH4(+)</text>
        <dbReference type="Rhea" id="RHEA:20557"/>
        <dbReference type="ChEBI" id="CHEBI:15377"/>
        <dbReference type="ChEBI" id="CHEBI:15378"/>
        <dbReference type="ChEBI" id="CHEBI:16199"/>
        <dbReference type="ChEBI" id="CHEBI:17544"/>
        <dbReference type="ChEBI" id="CHEBI:28938"/>
        <dbReference type="EC" id="3.5.1.5"/>
    </reaction>
</comment>
<comment type="pathway">
    <text evidence="1">Nitrogen metabolism; urea degradation; CO(2) and NH(3) from urea (urease route): step 1/1.</text>
</comment>
<comment type="subunit">
    <text evidence="1">Heterotrimer of UreA (gamma), UreB (beta) and UreC (alpha) subunits. Three heterotrimers associate to form the active enzyme.</text>
</comment>
<comment type="subcellular location">
    <subcellularLocation>
        <location evidence="1">Cytoplasm</location>
    </subcellularLocation>
</comment>
<comment type="similarity">
    <text evidence="1">Belongs to the urease beta subunit family.</text>
</comment>
<feature type="chain" id="PRO_1000070713" description="Urease subunit beta">
    <location>
        <begin position="1"/>
        <end position="122"/>
    </location>
</feature>
<feature type="region of interest" description="Disordered" evidence="2">
    <location>
        <begin position="102"/>
        <end position="122"/>
    </location>
</feature>
<proteinExistence type="inferred from homology"/>
<keyword id="KW-0963">Cytoplasm</keyword>
<keyword id="KW-0378">Hydrolase</keyword>
<name>URE2_PAEAT</name>
<sequence length="122" mass="13119">MIPGEYRLQPGSIACNSGRDAMVVEVVNRGDRPVQIGSHYHFAEANRALEFDREAAYGRRLDIPAGTAARFEPGDRKTVQLIELAGTREVHGLSNAVNGKLDGGTAVAGEPRPGIAAERDHQ</sequence>
<protein>
    <recommendedName>
        <fullName evidence="1">Urease subunit beta</fullName>
        <ecNumber evidence="1">3.5.1.5</ecNumber>
    </recommendedName>
    <alternativeName>
        <fullName evidence="1">Urea amidohydrolase subunit beta</fullName>
    </alternativeName>
</protein>
<accession>A1R1C4</accession>
<reference key="1">
    <citation type="journal article" date="2006" name="PLoS Genet.">
        <title>Secrets of soil survival revealed by the genome sequence of Arthrobacter aurescens TC1.</title>
        <authorList>
            <person name="Mongodin E.F."/>
            <person name="Shapir N."/>
            <person name="Daugherty S.C."/>
            <person name="DeBoy R.T."/>
            <person name="Emerson J.B."/>
            <person name="Shvartzbeyn A."/>
            <person name="Radune D."/>
            <person name="Vamathevan J."/>
            <person name="Riggs F."/>
            <person name="Grinberg V."/>
            <person name="Khouri H.M."/>
            <person name="Wackett L.P."/>
            <person name="Nelson K.E."/>
            <person name="Sadowsky M.J."/>
        </authorList>
    </citation>
    <scope>NUCLEOTIDE SEQUENCE [LARGE SCALE GENOMIC DNA]</scope>
    <source>
        <strain>TC1</strain>
    </source>
</reference>
<gene>
    <name evidence="1" type="primary">ureB</name>
    <name type="ordered locus">AAur_0215</name>
</gene>
<dbReference type="EC" id="3.5.1.5" evidence="1"/>
<dbReference type="EMBL" id="CP000474">
    <property type="protein sequence ID" value="ABM06946.1"/>
    <property type="molecule type" value="Genomic_DNA"/>
</dbReference>
<dbReference type="RefSeq" id="WP_011772984.1">
    <property type="nucleotide sequence ID" value="NC_008711.1"/>
</dbReference>
<dbReference type="SMR" id="A1R1C4"/>
<dbReference type="STRING" id="290340.AAur_0215"/>
<dbReference type="KEGG" id="aau:AAur_0215"/>
<dbReference type="eggNOG" id="COG0832">
    <property type="taxonomic scope" value="Bacteria"/>
</dbReference>
<dbReference type="HOGENOM" id="CLU_129707_1_1_11"/>
<dbReference type="OrthoDB" id="9797217at2"/>
<dbReference type="UniPathway" id="UPA00258">
    <property type="reaction ID" value="UER00370"/>
</dbReference>
<dbReference type="Proteomes" id="UP000000637">
    <property type="component" value="Chromosome"/>
</dbReference>
<dbReference type="GO" id="GO:0035550">
    <property type="term" value="C:urease complex"/>
    <property type="evidence" value="ECO:0007669"/>
    <property type="project" value="InterPro"/>
</dbReference>
<dbReference type="GO" id="GO:0009039">
    <property type="term" value="F:urease activity"/>
    <property type="evidence" value="ECO:0007669"/>
    <property type="project" value="UniProtKB-UniRule"/>
</dbReference>
<dbReference type="GO" id="GO:0043419">
    <property type="term" value="P:urea catabolic process"/>
    <property type="evidence" value="ECO:0007669"/>
    <property type="project" value="UniProtKB-UniRule"/>
</dbReference>
<dbReference type="CDD" id="cd00407">
    <property type="entry name" value="Urease_beta"/>
    <property type="match status" value="1"/>
</dbReference>
<dbReference type="FunFam" id="2.10.150.10:FF:000001">
    <property type="entry name" value="Urease subunit beta"/>
    <property type="match status" value="1"/>
</dbReference>
<dbReference type="Gene3D" id="2.10.150.10">
    <property type="entry name" value="Urease, beta subunit"/>
    <property type="match status" value="1"/>
</dbReference>
<dbReference type="HAMAP" id="MF_01954">
    <property type="entry name" value="Urease_beta"/>
    <property type="match status" value="1"/>
</dbReference>
<dbReference type="InterPro" id="IPR002019">
    <property type="entry name" value="Urease_beta-like"/>
</dbReference>
<dbReference type="InterPro" id="IPR036461">
    <property type="entry name" value="Urease_betasu_sf"/>
</dbReference>
<dbReference type="InterPro" id="IPR050069">
    <property type="entry name" value="Urease_subunit"/>
</dbReference>
<dbReference type="NCBIfam" id="NF009682">
    <property type="entry name" value="PRK13203.1"/>
    <property type="match status" value="1"/>
</dbReference>
<dbReference type="NCBIfam" id="TIGR00192">
    <property type="entry name" value="urease_beta"/>
    <property type="match status" value="1"/>
</dbReference>
<dbReference type="PANTHER" id="PTHR33569">
    <property type="entry name" value="UREASE"/>
    <property type="match status" value="1"/>
</dbReference>
<dbReference type="PANTHER" id="PTHR33569:SF1">
    <property type="entry name" value="UREASE"/>
    <property type="match status" value="1"/>
</dbReference>
<dbReference type="Pfam" id="PF00699">
    <property type="entry name" value="Urease_beta"/>
    <property type="match status" value="1"/>
</dbReference>
<dbReference type="SUPFAM" id="SSF51278">
    <property type="entry name" value="Urease, beta-subunit"/>
    <property type="match status" value="1"/>
</dbReference>
<organism>
    <name type="scientific">Paenarthrobacter aurescens (strain TC1)</name>
    <dbReference type="NCBI Taxonomy" id="290340"/>
    <lineage>
        <taxon>Bacteria</taxon>
        <taxon>Bacillati</taxon>
        <taxon>Actinomycetota</taxon>
        <taxon>Actinomycetes</taxon>
        <taxon>Micrococcales</taxon>
        <taxon>Micrococcaceae</taxon>
        <taxon>Paenarthrobacter</taxon>
    </lineage>
</organism>
<evidence type="ECO:0000255" key="1">
    <source>
        <dbReference type="HAMAP-Rule" id="MF_01954"/>
    </source>
</evidence>
<evidence type="ECO:0000256" key="2">
    <source>
        <dbReference type="SAM" id="MobiDB-lite"/>
    </source>
</evidence>